<sequence>MAGARRRARCPASAGCAYSARPPPLSTRGRRISAGSGQPRWWPWGSPPPLDTRYRRPGPGRRARSCLHAGPRGRPPHSRTRARRTSPGAGGGGWRGGSCTSQR</sequence>
<protein>
    <recommendedName>
        <fullName>Uncharacterized protein RPMS1</fullName>
    </recommendedName>
</protein>
<accession>Q3KSP3</accession>
<organism>
    <name type="scientific">Epstein-Barr virus (strain GD1)</name>
    <name type="common">HHV-4</name>
    <name type="synonym">Human gammaherpesvirus 4</name>
    <dbReference type="NCBI Taxonomy" id="10376"/>
    <lineage>
        <taxon>Viruses</taxon>
        <taxon>Duplodnaviria</taxon>
        <taxon>Heunggongvirae</taxon>
        <taxon>Peploviricota</taxon>
        <taxon>Herviviricetes</taxon>
        <taxon>Herpesvirales</taxon>
        <taxon>Orthoherpesviridae</taxon>
        <taxon>Gammaherpesvirinae</taxon>
        <taxon>Lymphocryptovirus</taxon>
        <taxon>Lymphocryptovirus humangamma4</taxon>
    </lineage>
</organism>
<proteinExistence type="inferred from homology"/>
<feature type="chain" id="PRO_0000382434" description="Uncharacterized protein RPMS1">
    <location>
        <begin position="1"/>
        <end position="103"/>
    </location>
</feature>
<feature type="region of interest" description="Disordered" evidence="1">
    <location>
        <begin position="1"/>
        <end position="103"/>
    </location>
</feature>
<feature type="compositionally biased region" description="Basic residues" evidence="1">
    <location>
        <begin position="55"/>
        <end position="65"/>
    </location>
</feature>
<feature type="compositionally biased region" description="Basic residues" evidence="1">
    <location>
        <begin position="74"/>
        <end position="84"/>
    </location>
</feature>
<dbReference type="EMBL" id="AY961628">
    <property type="protein sequence ID" value="ABA06396.1"/>
    <property type="molecule type" value="Genomic_DNA"/>
</dbReference>
<dbReference type="Proteomes" id="UP000007641">
    <property type="component" value="Genome"/>
</dbReference>
<organismHost>
    <name type="scientific">Homo sapiens</name>
    <name type="common">Human</name>
    <dbReference type="NCBI Taxonomy" id="9606"/>
</organismHost>
<comment type="similarity">
    <text evidence="2">Belongs to the epstein-barr virus RPMS1 family.</text>
</comment>
<name>RPMS1_EBVG</name>
<gene>
    <name type="primary">RPMS1</name>
</gene>
<evidence type="ECO:0000256" key="1">
    <source>
        <dbReference type="SAM" id="MobiDB-lite"/>
    </source>
</evidence>
<evidence type="ECO:0000305" key="2"/>
<reference key="1">
    <citation type="journal article" date="2005" name="J. Virol.">
        <title>Genomic sequence analysis of Epstein-Barr virus strain GD1 from a nasopharyngeal carcinoma patient.</title>
        <authorList>
            <person name="Zeng M.-S."/>
            <person name="Li D.-J."/>
            <person name="Liu Q.-L."/>
            <person name="Song L.-B."/>
            <person name="Li M.-Z."/>
            <person name="Zhang R.-H."/>
            <person name="Yu X.-J."/>
            <person name="Wang H.-M."/>
            <person name="Ernberg I."/>
            <person name="Zeng Y.-X."/>
        </authorList>
    </citation>
    <scope>NUCLEOTIDE SEQUENCE [LARGE SCALE GENOMIC DNA]</scope>
</reference>